<proteinExistence type="evidence at transcript level"/>
<dbReference type="EMBL" id="AB065794">
    <property type="protein sequence ID" value="BAC06013.1"/>
    <property type="molecule type" value="Genomic_DNA"/>
</dbReference>
<dbReference type="EMBL" id="CH471064">
    <property type="protein sequence ID" value="EAW68821.1"/>
    <property type="molecule type" value="Genomic_DNA"/>
</dbReference>
<dbReference type="EMBL" id="BC136830">
    <property type="protein sequence ID" value="AAI36831.1"/>
    <property type="molecule type" value="mRNA"/>
</dbReference>
<dbReference type="EMBL" id="BC136831">
    <property type="protein sequence ID" value="AAI36832.1"/>
    <property type="molecule type" value="mRNA"/>
</dbReference>
<dbReference type="EMBL" id="BK004285">
    <property type="protein sequence ID" value="DAA04683.1"/>
    <property type="molecule type" value="Genomic_DNA"/>
</dbReference>
<dbReference type="CCDS" id="CCDS31365.1"/>
<dbReference type="RefSeq" id="NP_001005238.1">
    <property type="nucleotide sequence ID" value="NM_001005238.2"/>
</dbReference>
<dbReference type="SMR" id="Q8NGK0"/>
<dbReference type="FunCoup" id="Q8NGK0">
    <property type="interactions" value="462"/>
</dbReference>
<dbReference type="STRING" id="9606.ENSP00000493323"/>
<dbReference type="GlyCosmos" id="Q8NGK0">
    <property type="glycosylation" value="1 site, No reported glycans"/>
</dbReference>
<dbReference type="GlyGen" id="Q8NGK0">
    <property type="glycosylation" value="1 site"/>
</dbReference>
<dbReference type="iPTMnet" id="Q8NGK0"/>
<dbReference type="PhosphoSitePlus" id="Q8NGK0"/>
<dbReference type="BioMuta" id="OR51G2"/>
<dbReference type="DMDM" id="38372712"/>
<dbReference type="PaxDb" id="9606-ENSP00000322593"/>
<dbReference type="Antibodypedia" id="57565">
    <property type="antibodies" value="47 antibodies from 17 providers"/>
</dbReference>
<dbReference type="DNASU" id="81282"/>
<dbReference type="Ensembl" id="ENST00000641926.1">
    <property type="protein sequence ID" value="ENSP00000493323.1"/>
    <property type="gene ID" value="ENSG00000176893.6"/>
</dbReference>
<dbReference type="GeneID" id="81282"/>
<dbReference type="KEGG" id="hsa:81282"/>
<dbReference type="MANE-Select" id="ENST00000641926.1">
    <property type="protein sequence ID" value="ENSP00000493323.1"/>
    <property type="RefSeq nucleotide sequence ID" value="NM_001005238.2"/>
    <property type="RefSeq protein sequence ID" value="NP_001005238.1"/>
</dbReference>
<dbReference type="UCSC" id="uc001lzr.1">
    <property type="organism name" value="human"/>
</dbReference>
<dbReference type="AGR" id="HGNC:15198"/>
<dbReference type="CTD" id="81282"/>
<dbReference type="GeneCards" id="OR51G2"/>
<dbReference type="HGNC" id="HGNC:15198">
    <property type="gene designation" value="OR51G2"/>
</dbReference>
<dbReference type="HPA" id="ENSG00000176893">
    <property type="expression patterns" value="Not detected"/>
</dbReference>
<dbReference type="neXtProt" id="NX_Q8NGK0"/>
<dbReference type="OpenTargets" id="ENSG00000176893"/>
<dbReference type="PharmGKB" id="PA32377"/>
<dbReference type="VEuPathDB" id="HostDB:ENSG00000176893"/>
<dbReference type="eggNOG" id="ENOG502QVH7">
    <property type="taxonomic scope" value="Eukaryota"/>
</dbReference>
<dbReference type="GeneTree" id="ENSGT01130000278286"/>
<dbReference type="HOGENOM" id="CLU_012526_0_0_1"/>
<dbReference type="InParanoid" id="Q8NGK0"/>
<dbReference type="OMA" id="GMFVIIS"/>
<dbReference type="OrthoDB" id="9444602at2759"/>
<dbReference type="PAN-GO" id="Q8NGK0">
    <property type="GO annotations" value="2 GO annotations based on evolutionary models"/>
</dbReference>
<dbReference type="PhylomeDB" id="Q8NGK0"/>
<dbReference type="TreeFam" id="TF342735"/>
<dbReference type="PathwayCommons" id="Q8NGK0"/>
<dbReference type="Reactome" id="R-HSA-9752946">
    <property type="pathway name" value="Expression and translocation of olfactory receptors"/>
</dbReference>
<dbReference type="BioGRID-ORCS" id="81282">
    <property type="hits" value="10 hits in 745 CRISPR screens"/>
</dbReference>
<dbReference type="GeneWiki" id="OR51G2"/>
<dbReference type="GenomeRNAi" id="81282"/>
<dbReference type="Pharos" id="Q8NGK0">
    <property type="development level" value="Tdark"/>
</dbReference>
<dbReference type="PRO" id="PR:Q8NGK0"/>
<dbReference type="Proteomes" id="UP000005640">
    <property type="component" value="Chromosome 11"/>
</dbReference>
<dbReference type="RNAct" id="Q8NGK0">
    <property type="molecule type" value="protein"/>
</dbReference>
<dbReference type="Bgee" id="ENSG00000176893">
    <property type="expression patterns" value="Expressed in male germ line stem cell (sensu Vertebrata) in testis"/>
</dbReference>
<dbReference type="GO" id="GO:0005886">
    <property type="term" value="C:plasma membrane"/>
    <property type="evidence" value="ECO:0000318"/>
    <property type="project" value="GO_Central"/>
</dbReference>
<dbReference type="GO" id="GO:0004930">
    <property type="term" value="F:G protein-coupled receptor activity"/>
    <property type="evidence" value="ECO:0007669"/>
    <property type="project" value="UniProtKB-KW"/>
</dbReference>
<dbReference type="GO" id="GO:0004984">
    <property type="term" value="F:olfactory receptor activity"/>
    <property type="evidence" value="ECO:0000318"/>
    <property type="project" value="GO_Central"/>
</dbReference>
<dbReference type="CDD" id="cd15222">
    <property type="entry name" value="7tmA_OR51-like"/>
    <property type="match status" value="1"/>
</dbReference>
<dbReference type="FunFam" id="1.20.1070.10:FF:000002">
    <property type="entry name" value="Olfactory receptor"/>
    <property type="match status" value="1"/>
</dbReference>
<dbReference type="Gene3D" id="1.20.1070.10">
    <property type="entry name" value="Rhodopsin 7-helix transmembrane proteins"/>
    <property type="match status" value="1"/>
</dbReference>
<dbReference type="InterPro" id="IPR000276">
    <property type="entry name" value="GPCR_Rhodpsn"/>
</dbReference>
<dbReference type="InterPro" id="IPR017452">
    <property type="entry name" value="GPCR_Rhodpsn_7TM"/>
</dbReference>
<dbReference type="InterPro" id="IPR000725">
    <property type="entry name" value="Olfact_rcpt"/>
</dbReference>
<dbReference type="InterPro" id="IPR050402">
    <property type="entry name" value="OR51/52/56-like"/>
</dbReference>
<dbReference type="PANTHER" id="PTHR26450:SF133">
    <property type="entry name" value="OLFACTORY RECEPTOR 51G2"/>
    <property type="match status" value="1"/>
</dbReference>
<dbReference type="PANTHER" id="PTHR26450">
    <property type="entry name" value="OLFACTORY RECEPTOR 56B1-RELATED"/>
    <property type="match status" value="1"/>
</dbReference>
<dbReference type="Pfam" id="PF13853">
    <property type="entry name" value="7tm_4"/>
    <property type="match status" value="1"/>
</dbReference>
<dbReference type="PRINTS" id="PR00237">
    <property type="entry name" value="GPCRRHODOPSN"/>
</dbReference>
<dbReference type="PRINTS" id="PR00245">
    <property type="entry name" value="OLFACTORYR"/>
</dbReference>
<dbReference type="SUPFAM" id="SSF81321">
    <property type="entry name" value="Family A G protein-coupled receptor-like"/>
    <property type="match status" value="1"/>
</dbReference>
<dbReference type="PROSITE" id="PS00237">
    <property type="entry name" value="G_PROTEIN_RECEP_F1_1"/>
    <property type="match status" value="1"/>
</dbReference>
<dbReference type="PROSITE" id="PS50262">
    <property type="entry name" value="G_PROTEIN_RECEP_F1_2"/>
    <property type="match status" value="1"/>
</dbReference>
<accession>Q8NGK0</accession>
<accession>Q6IFH7</accession>
<sequence length="314" mass="35012">MTLGSLGNSSSSVSATFLLSGIPGLERMHIWISIPLCFMYLVSIPGNCTILFIIKTERSLHEPMYLFLSMLALIDLGLSLCTLPTVLGIFWVGAREISHDACFAQLFFIHCFSFLESSVLLSMAFDRFVAICHPLHYVSILTNTVIGRIGLVSLGRSVALIFPLPFMLKRFPYCGSPVLSHSYCLHQEVMKLACADMKANSIYGMFVIVSTVGIDSLLILFSYALILRTVLSIASRAERFKALNTCVSHICAVLLFYTPMIGLSVIHRFGKQAPHLVQVVMGFMYLLFPPVMNPIVYSVKTKQIRDRVTHAFCY</sequence>
<organism>
    <name type="scientific">Homo sapiens</name>
    <name type="common">Human</name>
    <dbReference type="NCBI Taxonomy" id="9606"/>
    <lineage>
        <taxon>Eukaryota</taxon>
        <taxon>Metazoa</taxon>
        <taxon>Chordata</taxon>
        <taxon>Craniata</taxon>
        <taxon>Vertebrata</taxon>
        <taxon>Euteleostomi</taxon>
        <taxon>Mammalia</taxon>
        <taxon>Eutheria</taxon>
        <taxon>Euarchontoglires</taxon>
        <taxon>Primates</taxon>
        <taxon>Haplorrhini</taxon>
        <taxon>Catarrhini</taxon>
        <taxon>Hominidae</taxon>
        <taxon>Homo</taxon>
    </lineage>
</organism>
<comment type="function">
    <text evidence="3">Odorant receptor.</text>
</comment>
<comment type="subcellular location">
    <subcellularLocation>
        <location>Cell membrane</location>
        <topology>Multi-pass membrane protein</topology>
    </subcellularLocation>
</comment>
<comment type="similarity">
    <text evidence="2">Belongs to the G-protein coupled receptor 1 family.</text>
</comment>
<comment type="online information" name="Human Olfactory Receptor Data Exploratorium (HORDE)">
    <link uri="http://genome.weizmann.ac.il/horde/card/index/symbol:OR51G2"/>
</comment>
<name>O51G2_HUMAN</name>
<reference key="1">
    <citation type="submission" date="2001-07" db="EMBL/GenBank/DDBJ databases">
        <title>Genome-wide discovery and analysis of human seven transmembrane helix receptor genes.</title>
        <authorList>
            <person name="Suwa M."/>
            <person name="Sato T."/>
            <person name="Okouchi I."/>
            <person name="Arita M."/>
            <person name="Futami K."/>
            <person name="Matsumoto S."/>
            <person name="Tsutsumi S."/>
            <person name="Aburatani H."/>
            <person name="Asai K."/>
            <person name="Akiyama Y."/>
        </authorList>
    </citation>
    <scope>NUCLEOTIDE SEQUENCE [GENOMIC DNA]</scope>
</reference>
<reference key="2">
    <citation type="submission" date="2005-09" db="EMBL/GenBank/DDBJ databases">
        <authorList>
            <person name="Mural R.J."/>
            <person name="Istrail S."/>
            <person name="Sutton G.G."/>
            <person name="Florea L."/>
            <person name="Halpern A.L."/>
            <person name="Mobarry C.M."/>
            <person name="Lippert R."/>
            <person name="Walenz B."/>
            <person name="Shatkay H."/>
            <person name="Dew I."/>
            <person name="Miller J.R."/>
            <person name="Flanigan M.J."/>
            <person name="Edwards N.J."/>
            <person name="Bolanos R."/>
            <person name="Fasulo D."/>
            <person name="Halldorsson B.V."/>
            <person name="Hannenhalli S."/>
            <person name="Turner R."/>
            <person name="Yooseph S."/>
            <person name="Lu F."/>
            <person name="Nusskern D.R."/>
            <person name="Shue B.C."/>
            <person name="Zheng X.H."/>
            <person name="Zhong F."/>
            <person name="Delcher A.L."/>
            <person name="Huson D.H."/>
            <person name="Kravitz S.A."/>
            <person name="Mouchard L."/>
            <person name="Reinert K."/>
            <person name="Remington K.A."/>
            <person name="Clark A.G."/>
            <person name="Waterman M.S."/>
            <person name="Eichler E.E."/>
            <person name="Adams M.D."/>
            <person name="Hunkapiller M.W."/>
            <person name="Myers E.W."/>
            <person name="Venter J.C."/>
        </authorList>
    </citation>
    <scope>NUCLEOTIDE SEQUENCE [LARGE SCALE GENOMIC DNA]</scope>
</reference>
<reference key="3">
    <citation type="journal article" date="2004" name="Genome Res.">
        <title>The status, quality, and expansion of the NIH full-length cDNA project: the Mammalian Gene Collection (MGC).</title>
        <authorList>
            <consortium name="The MGC Project Team"/>
        </authorList>
    </citation>
    <scope>NUCLEOTIDE SEQUENCE [LARGE SCALE MRNA]</scope>
</reference>
<reference key="4">
    <citation type="journal article" date="2004" name="Proc. Natl. Acad. Sci. U.S.A.">
        <title>The human olfactory receptor gene family.</title>
        <authorList>
            <person name="Malnic B."/>
            <person name="Godfrey P.A."/>
            <person name="Buck L.B."/>
        </authorList>
    </citation>
    <scope>IDENTIFICATION</scope>
</reference>
<reference key="5">
    <citation type="journal article" date="2004" name="Proc. Natl. Acad. Sci. U.S.A.">
        <authorList>
            <person name="Malnic B."/>
            <person name="Godfrey P.A."/>
            <person name="Buck L.B."/>
        </authorList>
    </citation>
    <scope>ERRATUM OF PUBMED:14983052</scope>
</reference>
<evidence type="ECO:0000255" key="1"/>
<evidence type="ECO:0000255" key="2">
    <source>
        <dbReference type="PROSITE-ProRule" id="PRU00521"/>
    </source>
</evidence>
<evidence type="ECO:0000305" key="3"/>
<feature type="chain" id="PRO_0000150755" description="Olfactory receptor 51G2">
    <location>
        <begin position="1"/>
        <end position="314"/>
    </location>
</feature>
<feature type="topological domain" description="Extracellular" evidence="1">
    <location>
        <begin position="1"/>
        <end position="30"/>
    </location>
</feature>
<feature type="transmembrane region" description="Helical; Name=1" evidence="1">
    <location>
        <begin position="31"/>
        <end position="51"/>
    </location>
</feature>
<feature type="topological domain" description="Cytoplasmic" evidence="1">
    <location>
        <begin position="52"/>
        <end position="59"/>
    </location>
</feature>
<feature type="transmembrane region" description="Helical; Name=2" evidence="1">
    <location>
        <begin position="60"/>
        <end position="80"/>
    </location>
</feature>
<feature type="topological domain" description="Extracellular" evidence="1">
    <location>
        <begin position="81"/>
        <end position="104"/>
    </location>
</feature>
<feature type="transmembrane region" description="Helical; Name=3" evidence="1">
    <location>
        <begin position="105"/>
        <end position="125"/>
    </location>
</feature>
<feature type="topological domain" description="Cytoplasmic" evidence="1">
    <location>
        <begin position="126"/>
        <end position="144"/>
    </location>
</feature>
<feature type="transmembrane region" description="Helical; Name=4" evidence="1">
    <location>
        <begin position="145"/>
        <end position="165"/>
    </location>
</feature>
<feature type="topological domain" description="Extracellular" evidence="1">
    <location>
        <begin position="166"/>
        <end position="201"/>
    </location>
</feature>
<feature type="transmembrane region" description="Helical; Name=5" evidence="1">
    <location>
        <begin position="202"/>
        <end position="222"/>
    </location>
</feature>
<feature type="topological domain" description="Cytoplasmic" evidence="1">
    <location>
        <begin position="223"/>
        <end position="242"/>
    </location>
</feature>
<feature type="transmembrane region" description="Helical; Name=6" evidence="1">
    <location>
        <begin position="243"/>
        <end position="263"/>
    </location>
</feature>
<feature type="topological domain" description="Extracellular" evidence="1">
    <location>
        <begin position="264"/>
        <end position="278"/>
    </location>
</feature>
<feature type="transmembrane region" description="Helical; Name=7" evidence="1">
    <location>
        <begin position="279"/>
        <end position="299"/>
    </location>
</feature>
<feature type="topological domain" description="Cytoplasmic" evidence="1">
    <location>
        <begin position="300"/>
        <end position="314"/>
    </location>
</feature>
<feature type="glycosylation site" description="N-linked (GlcNAc...) asparagine" evidence="1">
    <location>
        <position position="8"/>
    </location>
</feature>
<feature type="disulfide bond" evidence="2">
    <location>
        <begin position="102"/>
        <end position="194"/>
    </location>
</feature>
<feature type="sequence variant" id="VAR_053327" description="In dbSNP:rs16907312.">
    <original>A</original>
    <variation>E</variation>
    <location>
        <position position="94"/>
    </location>
</feature>
<feature type="sequence variant" id="VAR_034319" description="In dbSNP:rs12419598.">
    <original>E</original>
    <variation>Q</variation>
    <location>
        <position position="96"/>
    </location>
</feature>
<gene>
    <name type="primary">OR51G2</name>
</gene>
<keyword id="KW-1003">Cell membrane</keyword>
<keyword id="KW-1015">Disulfide bond</keyword>
<keyword id="KW-0297">G-protein coupled receptor</keyword>
<keyword id="KW-0325">Glycoprotein</keyword>
<keyword id="KW-0472">Membrane</keyword>
<keyword id="KW-0552">Olfaction</keyword>
<keyword id="KW-0675">Receptor</keyword>
<keyword id="KW-1185">Reference proteome</keyword>
<keyword id="KW-0716">Sensory transduction</keyword>
<keyword id="KW-0807">Transducer</keyword>
<keyword id="KW-0812">Transmembrane</keyword>
<keyword id="KW-1133">Transmembrane helix</keyword>
<protein>
    <recommendedName>
        <fullName>Olfactory receptor 51G2</fullName>
    </recommendedName>
    <alternativeName>
        <fullName>Olfactory receptor OR11-28</fullName>
    </alternativeName>
</protein>